<keyword id="KW-0963">Cytoplasm</keyword>
<keyword id="KW-0413">Isomerase</keyword>
<keyword id="KW-0460">Magnesium</keyword>
<keyword id="KW-0479">Metal-binding</keyword>
<keyword id="KW-1185">Reference proteome</keyword>
<feature type="chain" id="PRO_0000382908" description="Phosphomannomutase">
    <location>
        <begin position="1"/>
        <end position="256"/>
    </location>
</feature>
<feature type="active site" description="Nucleophile" evidence="3">
    <location>
        <position position="12"/>
    </location>
</feature>
<feature type="active site" description="Proton donor/acceptor" evidence="3">
    <location>
        <position position="14"/>
    </location>
</feature>
<feature type="binding site" evidence="2">
    <location>
        <position position="12"/>
    </location>
    <ligand>
        <name>Mg(2+)</name>
        <dbReference type="ChEBI" id="CHEBI:18420"/>
    </ligand>
</feature>
<feature type="binding site" evidence="2">
    <location>
        <position position="14"/>
    </location>
    <ligand>
        <name>Mg(2+)</name>
        <dbReference type="ChEBI" id="CHEBI:18420"/>
    </ligand>
</feature>
<feature type="binding site" evidence="3">
    <location>
        <position position="21"/>
    </location>
    <ligand>
        <name>alpha-D-mannose 1-phosphate</name>
        <dbReference type="ChEBI" id="CHEBI:58409"/>
    </ligand>
</feature>
<feature type="binding site" evidence="3">
    <location>
        <position position="123"/>
    </location>
    <ligand>
        <name>alpha-D-mannose 1-phosphate</name>
        <dbReference type="ChEBI" id="CHEBI:58409"/>
    </ligand>
</feature>
<feature type="binding site" evidence="3">
    <location>
        <position position="134"/>
    </location>
    <ligand>
        <name>alpha-D-mannose 1-phosphate</name>
        <dbReference type="ChEBI" id="CHEBI:58409"/>
    </ligand>
</feature>
<feature type="binding site" evidence="3">
    <location>
        <position position="141"/>
    </location>
    <ligand>
        <name>alpha-D-mannose 1-phosphate</name>
        <dbReference type="ChEBI" id="CHEBI:58409"/>
    </ligand>
</feature>
<feature type="binding site" evidence="3">
    <location>
        <position position="179"/>
    </location>
    <ligand>
        <name>alpha-D-mannose 1-phosphate</name>
        <dbReference type="ChEBI" id="CHEBI:58409"/>
    </ligand>
</feature>
<feature type="binding site" evidence="3">
    <location>
        <position position="181"/>
    </location>
    <ligand>
        <name>alpha-D-mannose 1-phosphate</name>
        <dbReference type="ChEBI" id="CHEBI:58409"/>
    </ligand>
</feature>
<feature type="binding site" evidence="2">
    <location>
        <position position="209"/>
    </location>
    <ligand>
        <name>Mg(2+)</name>
        <dbReference type="ChEBI" id="CHEBI:18420"/>
    </ligand>
</feature>
<comment type="function">
    <text evidence="1">Involved in the synthesis of the GDP-mannose and dolichol-phosphate-mannose required for a number of critical mannosyl transfer reactions.</text>
</comment>
<comment type="catalytic activity">
    <reaction>
        <text>alpha-D-mannose 1-phosphate = D-mannose 6-phosphate</text>
        <dbReference type="Rhea" id="RHEA:11140"/>
        <dbReference type="ChEBI" id="CHEBI:58409"/>
        <dbReference type="ChEBI" id="CHEBI:58735"/>
        <dbReference type="EC" id="5.4.2.8"/>
    </reaction>
</comment>
<comment type="pathway">
    <text>Nucleotide-sugar biosynthesis; GDP-alpha-D-mannose biosynthesis; alpha-D-mannose 1-phosphate from D-fructose 6-phosphate: step 2/2.</text>
</comment>
<comment type="subunit">
    <text evidence="1">Homodimer.</text>
</comment>
<comment type="subcellular location">
    <subcellularLocation>
        <location evidence="1">Cytoplasm</location>
    </subcellularLocation>
</comment>
<comment type="developmental stage">
    <text evidence="4">Expressed in late sporogonial stages.</text>
</comment>
<comment type="similarity">
    <text evidence="5">Belongs to the eukaryotic PMM family.</text>
</comment>
<accession>Q8SVM5</accession>
<sequence>MARDEKTIFLFDVDGTLSESRAKMPEKMGKMLESLRRKVRIGFVGGSDLAKQKEQVGDNILEIFDYGFPENGVSFYKNGTLESQEKIIDVLGEEFYKEFANFVLRYLSDIDLPIKRGNFIEYRNSMINISPIGRNCSREERMKFFELDKKEKFREKMVTAMRDRFKDSCLVFSIGGQISIDCFPKGWDKTYCLRHIKKEGVENVYFFGDMTMEGGNDYEIYNHKDVHGISVGNPDDTYRKVDQALKKIGLGGLEEN</sequence>
<protein>
    <recommendedName>
        <fullName>Phosphomannomutase</fullName>
        <shortName>PMM</shortName>
        <ecNumber>5.4.2.8</ecNumber>
    </recommendedName>
</protein>
<gene>
    <name type="primary">SEC53</name>
    <name type="ordered locus">ECU05_0260</name>
</gene>
<proteinExistence type="evidence at protein level"/>
<dbReference type="EC" id="5.4.2.8"/>
<dbReference type="EMBL" id="AL590445">
    <property type="protein sequence ID" value="CAD26542.1"/>
    <property type="molecule type" value="Genomic_DNA"/>
</dbReference>
<dbReference type="RefSeq" id="NP_597365.1">
    <property type="nucleotide sequence ID" value="NM_001041231.1"/>
</dbReference>
<dbReference type="SMR" id="Q8SVM5"/>
<dbReference type="FunCoup" id="Q8SVM5">
    <property type="interactions" value="106"/>
</dbReference>
<dbReference type="STRING" id="284813.Q8SVM5"/>
<dbReference type="GeneID" id="859029"/>
<dbReference type="KEGG" id="ecu:ECU05_0260"/>
<dbReference type="VEuPathDB" id="MicrosporidiaDB:ECU05_0260"/>
<dbReference type="HOGENOM" id="CLU_065642_0_1_1"/>
<dbReference type="InParanoid" id="Q8SVM5"/>
<dbReference type="OMA" id="ISHRVYT"/>
<dbReference type="OrthoDB" id="10264771at2759"/>
<dbReference type="UniPathway" id="UPA00126">
    <property type="reaction ID" value="UER00424"/>
</dbReference>
<dbReference type="Proteomes" id="UP000000819">
    <property type="component" value="Chromosome V"/>
</dbReference>
<dbReference type="GO" id="GO:0005829">
    <property type="term" value="C:cytosol"/>
    <property type="evidence" value="ECO:0007669"/>
    <property type="project" value="TreeGrafter"/>
</dbReference>
<dbReference type="GO" id="GO:0046872">
    <property type="term" value="F:metal ion binding"/>
    <property type="evidence" value="ECO:0007669"/>
    <property type="project" value="UniProtKB-KW"/>
</dbReference>
<dbReference type="GO" id="GO:0004615">
    <property type="term" value="F:phosphomannomutase activity"/>
    <property type="evidence" value="ECO:0007669"/>
    <property type="project" value="UniProtKB-EC"/>
</dbReference>
<dbReference type="GO" id="GO:0009298">
    <property type="term" value="P:GDP-mannose biosynthetic process"/>
    <property type="evidence" value="ECO:0007669"/>
    <property type="project" value="UniProtKB-UniPathway"/>
</dbReference>
<dbReference type="GO" id="GO:0006013">
    <property type="term" value="P:mannose metabolic process"/>
    <property type="evidence" value="ECO:0007669"/>
    <property type="project" value="TreeGrafter"/>
</dbReference>
<dbReference type="GO" id="GO:0006487">
    <property type="term" value="P:protein N-linked glycosylation"/>
    <property type="evidence" value="ECO:0007669"/>
    <property type="project" value="TreeGrafter"/>
</dbReference>
<dbReference type="CDD" id="cd02585">
    <property type="entry name" value="HAD_PMM"/>
    <property type="match status" value="1"/>
</dbReference>
<dbReference type="FunFam" id="3.30.1240.20:FF:000001">
    <property type="entry name" value="Phosphomannomutase"/>
    <property type="match status" value="1"/>
</dbReference>
<dbReference type="Gene3D" id="3.30.1240.20">
    <property type="match status" value="1"/>
</dbReference>
<dbReference type="Gene3D" id="3.40.50.1000">
    <property type="entry name" value="HAD superfamily/HAD-like"/>
    <property type="match status" value="1"/>
</dbReference>
<dbReference type="InterPro" id="IPR036412">
    <property type="entry name" value="HAD-like_sf"/>
</dbReference>
<dbReference type="InterPro" id="IPR006379">
    <property type="entry name" value="HAD-SF_hydro_IIB"/>
</dbReference>
<dbReference type="InterPro" id="IPR023214">
    <property type="entry name" value="HAD_sf"/>
</dbReference>
<dbReference type="InterPro" id="IPR005002">
    <property type="entry name" value="PMM"/>
</dbReference>
<dbReference type="InterPro" id="IPR043169">
    <property type="entry name" value="PMM_cap"/>
</dbReference>
<dbReference type="NCBIfam" id="TIGR01484">
    <property type="entry name" value="HAD-SF-IIB"/>
    <property type="match status" value="1"/>
</dbReference>
<dbReference type="PANTHER" id="PTHR10466">
    <property type="entry name" value="PHOSPHOMANNOMUTASE"/>
    <property type="match status" value="1"/>
</dbReference>
<dbReference type="PANTHER" id="PTHR10466:SF0">
    <property type="entry name" value="PHOSPHOMANNOMUTASE"/>
    <property type="match status" value="1"/>
</dbReference>
<dbReference type="Pfam" id="PF03332">
    <property type="entry name" value="PMM"/>
    <property type="match status" value="1"/>
</dbReference>
<dbReference type="SFLD" id="SFLDF00445">
    <property type="entry name" value="alpha-phosphomannomutase"/>
    <property type="match status" value="1"/>
</dbReference>
<dbReference type="SFLD" id="SFLDG01140">
    <property type="entry name" value="C2.B:_Phosphomannomutase_and_P"/>
    <property type="match status" value="1"/>
</dbReference>
<dbReference type="SUPFAM" id="SSF56784">
    <property type="entry name" value="HAD-like"/>
    <property type="match status" value="1"/>
</dbReference>
<reference key="1">
    <citation type="journal article" date="2001" name="Nature">
        <title>Genome sequence and gene compaction of the eukaryote parasite Encephalitozoon cuniculi.</title>
        <authorList>
            <person name="Katinka M.D."/>
            <person name="Duprat S."/>
            <person name="Cornillot E."/>
            <person name="Metenier G."/>
            <person name="Thomarat F."/>
            <person name="Prensier G."/>
            <person name="Barbe V."/>
            <person name="Peyretaillade E."/>
            <person name="Brottier P."/>
            <person name="Wincker P."/>
            <person name="Delbac F."/>
            <person name="El Alaoui H."/>
            <person name="Peyret P."/>
            <person name="Saurin W."/>
            <person name="Gouy M."/>
            <person name="Weissenbach J."/>
            <person name="Vivares C.P."/>
        </authorList>
    </citation>
    <scope>NUCLEOTIDE SEQUENCE [LARGE SCALE GENOMIC DNA]</scope>
    <source>
        <strain>GB-M1</strain>
    </source>
</reference>
<reference key="2">
    <citation type="journal article" date="2006" name="Proteomics">
        <title>Proteomic analysis of the eukaryotic parasite Encephalitozoon cuniculi (microsporidia): a reference map for proteins expressed in late sporogonial stages.</title>
        <authorList>
            <person name="Brosson D."/>
            <person name="Kuhn L."/>
            <person name="Delbac F."/>
            <person name="Garin J."/>
            <person name="Vivares C.P."/>
            <person name="Texier C."/>
        </authorList>
    </citation>
    <scope>IDENTIFICATION BY MASS SPECTROMETRY [LARGE SCALE ANALYSIS]</scope>
    <scope>DEVELOPMENTAL STAGE</scope>
</reference>
<evidence type="ECO:0000250" key="1"/>
<evidence type="ECO:0000250" key="2">
    <source>
        <dbReference type="UniProtKB" id="P31353"/>
    </source>
</evidence>
<evidence type="ECO:0000250" key="3">
    <source>
        <dbReference type="UniProtKB" id="Q92871"/>
    </source>
</evidence>
<evidence type="ECO:0000269" key="4">
    <source>
    </source>
</evidence>
<evidence type="ECO:0000305" key="5"/>
<name>PMM_ENCCU</name>
<organism>
    <name type="scientific">Encephalitozoon cuniculi (strain GB-M1)</name>
    <name type="common">Microsporidian parasite</name>
    <dbReference type="NCBI Taxonomy" id="284813"/>
    <lineage>
        <taxon>Eukaryota</taxon>
        <taxon>Fungi</taxon>
        <taxon>Fungi incertae sedis</taxon>
        <taxon>Microsporidia</taxon>
        <taxon>Unikaryonidae</taxon>
        <taxon>Encephalitozoon</taxon>
    </lineage>
</organism>